<organism>
    <name type="scientific">Leuconostoc mesenteroides subsp. mesenteroides (strain ATCC 8293 / DSM 20343 / BCRC 11652 / CCM 1803 / JCM 6124 / NCDO 523 / NBRC 100496 / NCIMB 8023 / NCTC 12954 / NRRL B-1118 / 37Y)</name>
    <dbReference type="NCBI Taxonomy" id="203120"/>
    <lineage>
        <taxon>Bacteria</taxon>
        <taxon>Bacillati</taxon>
        <taxon>Bacillota</taxon>
        <taxon>Bacilli</taxon>
        <taxon>Lactobacillales</taxon>
        <taxon>Lactobacillaceae</taxon>
        <taxon>Leuconostoc</taxon>
    </lineage>
</organism>
<keyword id="KW-0963">Cytoplasm</keyword>
<keyword id="KW-0489">Methyltransferase</keyword>
<keyword id="KW-1185">Reference proteome</keyword>
<keyword id="KW-0694">RNA-binding</keyword>
<keyword id="KW-0698">rRNA processing</keyword>
<keyword id="KW-0949">S-adenosyl-L-methionine</keyword>
<keyword id="KW-0808">Transferase</keyword>
<protein>
    <recommendedName>
        <fullName evidence="1">Ribosomal RNA small subunit methyltransferase A</fullName>
        <ecNumber evidence="1">2.1.1.182</ecNumber>
    </recommendedName>
    <alternativeName>
        <fullName evidence="1">16S rRNA (adenine(1518)-N(6)/adenine(1519)-N(6))-dimethyltransferase</fullName>
    </alternativeName>
    <alternativeName>
        <fullName evidence="1">16S rRNA dimethyladenosine transferase</fullName>
    </alternativeName>
    <alternativeName>
        <fullName evidence="1">16S rRNA dimethylase</fullName>
    </alternativeName>
    <alternativeName>
        <fullName evidence="1">S-adenosylmethionine-6-N', N'-adenosyl(rRNA) dimethyltransferase</fullName>
    </alternativeName>
</protein>
<reference key="1">
    <citation type="journal article" date="2006" name="Proc. Natl. Acad. Sci. U.S.A.">
        <title>Comparative genomics of the lactic acid bacteria.</title>
        <authorList>
            <person name="Makarova K.S."/>
            <person name="Slesarev A."/>
            <person name="Wolf Y.I."/>
            <person name="Sorokin A."/>
            <person name="Mirkin B."/>
            <person name="Koonin E.V."/>
            <person name="Pavlov A."/>
            <person name="Pavlova N."/>
            <person name="Karamychev V."/>
            <person name="Polouchine N."/>
            <person name="Shakhova V."/>
            <person name="Grigoriev I."/>
            <person name="Lou Y."/>
            <person name="Rohksar D."/>
            <person name="Lucas S."/>
            <person name="Huang K."/>
            <person name="Goodstein D.M."/>
            <person name="Hawkins T."/>
            <person name="Plengvidhya V."/>
            <person name="Welker D."/>
            <person name="Hughes J."/>
            <person name="Goh Y."/>
            <person name="Benson A."/>
            <person name="Baldwin K."/>
            <person name="Lee J.-H."/>
            <person name="Diaz-Muniz I."/>
            <person name="Dosti B."/>
            <person name="Smeianov V."/>
            <person name="Wechter W."/>
            <person name="Barabote R."/>
            <person name="Lorca G."/>
            <person name="Altermann E."/>
            <person name="Barrangou R."/>
            <person name="Ganesan B."/>
            <person name="Xie Y."/>
            <person name="Rawsthorne H."/>
            <person name="Tamir D."/>
            <person name="Parker C."/>
            <person name="Breidt F."/>
            <person name="Broadbent J.R."/>
            <person name="Hutkins R."/>
            <person name="O'Sullivan D."/>
            <person name="Steele J."/>
            <person name="Unlu G."/>
            <person name="Saier M.H. Jr."/>
            <person name="Klaenhammer T."/>
            <person name="Richardson P."/>
            <person name="Kozyavkin S."/>
            <person name="Weimer B.C."/>
            <person name="Mills D.A."/>
        </authorList>
    </citation>
    <scope>NUCLEOTIDE SEQUENCE [LARGE SCALE GENOMIC DNA]</scope>
    <source>
        <strain>ATCC 8293 / DSM 20343 / BCRC 11652 / CCM 1803 / JCM 6124 / NCDO 523 / NBRC 100496 / NCIMB 8023 / NCTC 12954 / NRRL B-1118 / 37Y</strain>
    </source>
</reference>
<name>RSMA_LEUMM</name>
<accession>Q03VR7</accession>
<comment type="function">
    <text evidence="1">Specifically dimethylates two adjacent adenosines (A1518 and A1519) in the loop of a conserved hairpin near the 3'-end of 16S rRNA in the 30S particle. May play a critical role in biogenesis of 30S subunits.</text>
</comment>
<comment type="catalytic activity">
    <reaction evidence="1">
        <text>adenosine(1518)/adenosine(1519) in 16S rRNA + 4 S-adenosyl-L-methionine = N(6)-dimethyladenosine(1518)/N(6)-dimethyladenosine(1519) in 16S rRNA + 4 S-adenosyl-L-homocysteine + 4 H(+)</text>
        <dbReference type="Rhea" id="RHEA:19609"/>
        <dbReference type="Rhea" id="RHEA-COMP:10232"/>
        <dbReference type="Rhea" id="RHEA-COMP:10233"/>
        <dbReference type="ChEBI" id="CHEBI:15378"/>
        <dbReference type="ChEBI" id="CHEBI:57856"/>
        <dbReference type="ChEBI" id="CHEBI:59789"/>
        <dbReference type="ChEBI" id="CHEBI:74411"/>
        <dbReference type="ChEBI" id="CHEBI:74493"/>
        <dbReference type="EC" id="2.1.1.182"/>
    </reaction>
</comment>
<comment type="subcellular location">
    <subcellularLocation>
        <location evidence="1">Cytoplasm</location>
    </subcellularLocation>
</comment>
<comment type="similarity">
    <text evidence="1">Belongs to the class I-like SAM-binding methyltransferase superfamily. rRNA adenine N(6)-methyltransferase family. RsmA subfamily.</text>
</comment>
<proteinExistence type="inferred from homology"/>
<dbReference type="EC" id="2.1.1.182" evidence="1"/>
<dbReference type="EMBL" id="CP000414">
    <property type="protein sequence ID" value="ABJ62705.1"/>
    <property type="molecule type" value="Genomic_DNA"/>
</dbReference>
<dbReference type="RefSeq" id="WP_011680262.1">
    <property type="nucleotide sequence ID" value="NC_008531.1"/>
</dbReference>
<dbReference type="SMR" id="Q03VR7"/>
<dbReference type="EnsemblBacteria" id="ABJ62705">
    <property type="protein sequence ID" value="ABJ62705"/>
    <property type="gene ID" value="LEUM_1613"/>
</dbReference>
<dbReference type="GeneID" id="29577073"/>
<dbReference type="KEGG" id="lme:LEUM_1613"/>
<dbReference type="eggNOG" id="COG0030">
    <property type="taxonomic scope" value="Bacteria"/>
</dbReference>
<dbReference type="HOGENOM" id="CLU_041220_0_0_9"/>
<dbReference type="Proteomes" id="UP000000362">
    <property type="component" value="Chromosome"/>
</dbReference>
<dbReference type="GO" id="GO:0005829">
    <property type="term" value="C:cytosol"/>
    <property type="evidence" value="ECO:0007669"/>
    <property type="project" value="TreeGrafter"/>
</dbReference>
<dbReference type="GO" id="GO:0052908">
    <property type="term" value="F:16S rRNA (adenine(1518)-N(6)/adenine(1519)-N(6))-dimethyltransferase activity"/>
    <property type="evidence" value="ECO:0007669"/>
    <property type="project" value="UniProtKB-EC"/>
</dbReference>
<dbReference type="GO" id="GO:0003723">
    <property type="term" value="F:RNA binding"/>
    <property type="evidence" value="ECO:0007669"/>
    <property type="project" value="UniProtKB-KW"/>
</dbReference>
<dbReference type="CDD" id="cd02440">
    <property type="entry name" value="AdoMet_MTases"/>
    <property type="match status" value="1"/>
</dbReference>
<dbReference type="FunFam" id="3.40.50.150:FF:000023">
    <property type="entry name" value="Ribosomal RNA small subunit methyltransferase A"/>
    <property type="match status" value="1"/>
</dbReference>
<dbReference type="Gene3D" id="1.10.8.100">
    <property type="entry name" value="Ribosomal RNA adenine dimethylase-like, domain 2"/>
    <property type="match status" value="1"/>
</dbReference>
<dbReference type="Gene3D" id="3.40.50.150">
    <property type="entry name" value="Vaccinia Virus protein VP39"/>
    <property type="match status" value="1"/>
</dbReference>
<dbReference type="HAMAP" id="MF_00607">
    <property type="entry name" value="16SrRNA_methyltr_A"/>
    <property type="match status" value="1"/>
</dbReference>
<dbReference type="InterPro" id="IPR001737">
    <property type="entry name" value="KsgA/Erm"/>
</dbReference>
<dbReference type="InterPro" id="IPR023165">
    <property type="entry name" value="rRNA_Ade_diMease-like_C"/>
</dbReference>
<dbReference type="InterPro" id="IPR020596">
    <property type="entry name" value="rRNA_Ade_Mease_Trfase_CS"/>
</dbReference>
<dbReference type="InterPro" id="IPR020598">
    <property type="entry name" value="rRNA_Ade_methylase_Trfase_N"/>
</dbReference>
<dbReference type="InterPro" id="IPR011530">
    <property type="entry name" value="rRNA_adenine_dimethylase"/>
</dbReference>
<dbReference type="InterPro" id="IPR029063">
    <property type="entry name" value="SAM-dependent_MTases_sf"/>
</dbReference>
<dbReference type="NCBIfam" id="TIGR00755">
    <property type="entry name" value="ksgA"/>
    <property type="match status" value="1"/>
</dbReference>
<dbReference type="PANTHER" id="PTHR11727">
    <property type="entry name" value="DIMETHYLADENOSINE TRANSFERASE"/>
    <property type="match status" value="1"/>
</dbReference>
<dbReference type="PANTHER" id="PTHR11727:SF7">
    <property type="entry name" value="DIMETHYLADENOSINE TRANSFERASE-RELATED"/>
    <property type="match status" value="1"/>
</dbReference>
<dbReference type="Pfam" id="PF00398">
    <property type="entry name" value="RrnaAD"/>
    <property type="match status" value="1"/>
</dbReference>
<dbReference type="SMART" id="SM00650">
    <property type="entry name" value="rADc"/>
    <property type="match status" value="1"/>
</dbReference>
<dbReference type="SUPFAM" id="SSF53335">
    <property type="entry name" value="S-adenosyl-L-methionine-dependent methyltransferases"/>
    <property type="match status" value="1"/>
</dbReference>
<dbReference type="PROSITE" id="PS01131">
    <property type="entry name" value="RRNA_A_DIMETH"/>
    <property type="match status" value="1"/>
</dbReference>
<dbReference type="PROSITE" id="PS51689">
    <property type="entry name" value="SAM_RNA_A_N6_MT"/>
    <property type="match status" value="1"/>
</dbReference>
<feature type="chain" id="PRO_1000056632" description="Ribosomal RNA small subunit methyltransferase A">
    <location>
        <begin position="1"/>
        <end position="295"/>
    </location>
</feature>
<feature type="binding site" evidence="1">
    <location>
        <position position="31"/>
    </location>
    <ligand>
        <name>S-adenosyl-L-methionine</name>
        <dbReference type="ChEBI" id="CHEBI:59789"/>
    </ligand>
</feature>
<feature type="binding site" evidence="1">
    <location>
        <position position="33"/>
    </location>
    <ligand>
        <name>S-adenosyl-L-methionine</name>
        <dbReference type="ChEBI" id="CHEBI:59789"/>
    </ligand>
</feature>
<feature type="binding site" evidence="1">
    <location>
        <position position="58"/>
    </location>
    <ligand>
        <name>S-adenosyl-L-methionine</name>
        <dbReference type="ChEBI" id="CHEBI:59789"/>
    </ligand>
</feature>
<feature type="binding site" evidence="1">
    <location>
        <position position="79"/>
    </location>
    <ligand>
        <name>S-adenosyl-L-methionine</name>
        <dbReference type="ChEBI" id="CHEBI:59789"/>
    </ligand>
</feature>
<feature type="binding site" evidence="1">
    <location>
        <position position="104"/>
    </location>
    <ligand>
        <name>S-adenosyl-L-methionine</name>
        <dbReference type="ChEBI" id="CHEBI:59789"/>
    </ligand>
</feature>
<feature type="binding site" evidence="1">
    <location>
        <position position="129"/>
    </location>
    <ligand>
        <name>S-adenosyl-L-methionine</name>
        <dbReference type="ChEBI" id="CHEBI:59789"/>
    </ligand>
</feature>
<gene>
    <name evidence="1" type="primary">rsmA</name>
    <name evidence="1" type="synonym">ksgA</name>
    <name type="ordered locus">LEUM_1613</name>
</gene>
<evidence type="ECO:0000255" key="1">
    <source>
        <dbReference type="HAMAP-Rule" id="MF_00607"/>
    </source>
</evidence>
<sequence length="295" mass="32684">MAQTIDIANPTRTQAILNEYGLRAKKKFGQNFLTDLNVLHNIVEAAEITAEDYVIEIGPGIGALTEQLARSAKKVLAFEIDSQMVEVLADTLKPYDNVKVIENDVLKVDLAKVISEEFGDNAHVKIVANLPYYITTPILIQLLRSNINWDNIVVMMQREVADRLNAAVGTKSYGVLTLTIQYFAQATLAIKVPASSFNPSPNVDSAVVKLTPLKPTTVVENVGKLFGVIKGSFSHRRKSLWNNMLQTYGKDAGTKEQLTVALKSAQIDPAIRAERLNLEQFTQLYLALRDQNLTQ</sequence>